<proteinExistence type="evidence at protein level"/>
<dbReference type="EMBL" id="U49400">
    <property type="protein sequence ID" value="AAC34720.1"/>
    <property type="molecule type" value="Genomic_DNA"/>
</dbReference>
<dbReference type="EMBL" id="U00096">
    <property type="protein sequence ID" value="AAC74401.1"/>
    <property type="molecule type" value="Genomic_DNA"/>
</dbReference>
<dbReference type="EMBL" id="AP009048">
    <property type="protein sequence ID" value="BAE76401.1"/>
    <property type="molecule type" value="Genomic_DNA"/>
</dbReference>
<dbReference type="PIR" id="B64881">
    <property type="entry name" value="B64881"/>
</dbReference>
<dbReference type="RefSeq" id="NP_415835.1">
    <property type="nucleotide sequence ID" value="NC_000913.3"/>
</dbReference>
<dbReference type="RefSeq" id="WP_000735257.1">
    <property type="nucleotide sequence ID" value="NZ_SSZK01000012.1"/>
</dbReference>
<dbReference type="PDB" id="2F1C">
    <property type="method" value="X-ray"/>
    <property type="resolution" value="2.30 A"/>
    <property type="chains" value="X=22-301"/>
</dbReference>
<dbReference type="PDB" id="2IWV">
    <property type="method" value="X-ray"/>
    <property type="resolution" value="2.30 A"/>
    <property type="chains" value="A/B/C/D=22-301"/>
</dbReference>
<dbReference type="PDB" id="2IWW">
    <property type="method" value="X-ray"/>
    <property type="resolution" value="2.70 A"/>
    <property type="chains" value="A/B=22-301"/>
</dbReference>
<dbReference type="PDB" id="2JQY">
    <property type="method" value="NMR"/>
    <property type="chains" value="A=22-301"/>
</dbReference>
<dbReference type="PDB" id="2WVP">
    <property type="method" value="X-ray"/>
    <property type="resolution" value="2.40 A"/>
    <property type="chains" value="A=22-301"/>
</dbReference>
<dbReference type="PDB" id="2X9K">
    <property type="method" value="X-ray"/>
    <property type="resolution" value="2.18 A"/>
    <property type="chains" value="A=22-301"/>
</dbReference>
<dbReference type="PDB" id="4CTD">
    <property type="method" value="X-ray"/>
    <property type="resolution" value="3.20 A"/>
    <property type="chains" value="A/B=22-301"/>
</dbReference>
<dbReference type="PDB" id="5MWV">
    <property type="method" value="NMR"/>
    <property type="chains" value="A=22-301"/>
</dbReference>
<dbReference type="PDB" id="6OQH">
    <property type="method" value="NMR"/>
    <property type="chains" value="A=22-301"/>
</dbReference>
<dbReference type="PDB" id="7Q5C">
    <property type="method" value="X-ray"/>
    <property type="resolution" value="2.72 A"/>
    <property type="chains" value="XXX=22-301"/>
</dbReference>
<dbReference type="PDBsum" id="2F1C"/>
<dbReference type="PDBsum" id="2IWV"/>
<dbReference type="PDBsum" id="2IWW"/>
<dbReference type="PDBsum" id="2JQY"/>
<dbReference type="PDBsum" id="2WVP"/>
<dbReference type="PDBsum" id="2X9K"/>
<dbReference type="PDBsum" id="4CTD"/>
<dbReference type="PDBsum" id="5MWV"/>
<dbReference type="PDBsum" id="6OQH"/>
<dbReference type="PDBsum" id="7Q5C"/>
<dbReference type="BMRB" id="P76045"/>
<dbReference type="SMR" id="P76045"/>
<dbReference type="BioGRID" id="4260146">
    <property type="interactions" value="153"/>
</dbReference>
<dbReference type="DIP" id="DIP-10399N"/>
<dbReference type="FunCoup" id="P76045">
    <property type="interactions" value="348"/>
</dbReference>
<dbReference type="IntAct" id="P76045">
    <property type="interactions" value="1"/>
</dbReference>
<dbReference type="STRING" id="511145.b1319"/>
<dbReference type="DrugBank" id="DB04233">
    <property type="generic name" value="(Hydroxyethyloxy)Tri(Ethyloxy)Octane"/>
</dbReference>
<dbReference type="DrugBank" id="DB04147">
    <property type="generic name" value="Dodecyldimethylamine N-oxide"/>
</dbReference>
<dbReference type="TCDB" id="1.B.21.1.1">
    <property type="family name" value="the ompg porin (ompg) family"/>
</dbReference>
<dbReference type="PaxDb" id="511145-b1319"/>
<dbReference type="EnsemblBacteria" id="AAC74401">
    <property type="protein sequence ID" value="AAC74401"/>
    <property type="gene ID" value="b1319"/>
</dbReference>
<dbReference type="GeneID" id="75203434"/>
<dbReference type="GeneID" id="945889"/>
<dbReference type="KEGG" id="ecj:JW1312"/>
<dbReference type="KEGG" id="eco:b1319"/>
<dbReference type="KEGG" id="ecoc:C3026_07725"/>
<dbReference type="PATRIC" id="fig|1411691.4.peg.959"/>
<dbReference type="EchoBASE" id="EB3202"/>
<dbReference type="eggNOG" id="ENOG502Z9QU">
    <property type="taxonomic scope" value="Bacteria"/>
</dbReference>
<dbReference type="HOGENOM" id="CLU_079589_0_0_6"/>
<dbReference type="InParanoid" id="P76045"/>
<dbReference type="OMA" id="YGYHYVN"/>
<dbReference type="OrthoDB" id="6599703at2"/>
<dbReference type="BioCyc" id="EcoCyc:G6657-MONOMER"/>
<dbReference type="BioCyc" id="MetaCyc:G6657-MONOMER"/>
<dbReference type="EvolutionaryTrace" id="P76045"/>
<dbReference type="PRO" id="PR:P76045"/>
<dbReference type="Proteomes" id="UP000000625">
    <property type="component" value="Chromosome"/>
</dbReference>
<dbReference type="GO" id="GO:0009279">
    <property type="term" value="C:cell outer membrane"/>
    <property type="evidence" value="ECO:0000314"/>
    <property type="project" value="EcoCyc"/>
</dbReference>
<dbReference type="GO" id="GO:0046930">
    <property type="term" value="C:pore complex"/>
    <property type="evidence" value="ECO:0007669"/>
    <property type="project" value="UniProtKB-KW"/>
</dbReference>
<dbReference type="GO" id="GO:0015481">
    <property type="term" value="F:maltose transporting porin activity"/>
    <property type="evidence" value="ECO:0000314"/>
    <property type="project" value="EcoCyc"/>
</dbReference>
<dbReference type="GO" id="GO:0015478">
    <property type="term" value="F:oligosaccharide transporting porin activity"/>
    <property type="evidence" value="ECO:0000314"/>
    <property type="project" value="EcoCyc"/>
</dbReference>
<dbReference type="GO" id="GO:0015288">
    <property type="term" value="F:porin activity"/>
    <property type="evidence" value="ECO:0000315"/>
    <property type="project" value="EcoliWiki"/>
</dbReference>
<dbReference type="GO" id="GO:0034219">
    <property type="term" value="P:carbohydrate transmembrane transport"/>
    <property type="evidence" value="ECO:0000314"/>
    <property type="project" value="EcoCyc"/>
</dbReference>
<dbReference type="GO" id="GO:0006811">
    <property type="term" value="P:monoatomic ion transport"/>
    <property type="evidence" value="ECO:0007669"/>
    <property type="project" value="UniProtKB-KW"/>
</dbReference>
<dbReference type="FunFam" id="2.40.160.40:FF:000003">
    <property type="entry name" value="Outer membrane porin G"/>
    <property type="match status" value="1"/>
</dbReference>
<dbReference type="Gene3D" id="2.40.160.40">
    <property type="entry name" value="monomeric porin ompg"/>
    <property type="match status" value="1"/>
</dbReference>
<dbReference type="InterPro" id="IPR053713">
    <property type="entry name" value="Bact_OM_Channel_sf"/>
</dbReference>
<dbReference type="InterPro" id="IPR018981">
    <property type="entry name" value="Outer_membrane_porin_G"/>
</dbReference>
<dbReference type="Pfam" id="PF09381">
    <property type="entry name" value="Porin_OmpG"/>
    <property type="match status" value="1"/>
</dbReference>
<dbReference type="SUPFAM" id="SSF56935">
    <property type="entry name" value="Porins"/>
    <property type="match status" value="1"/>
</dbReference>
<name>OMPG_ECOLI</name>
<reference key="1">
    <citation type="journal article" date="1998" name="J. Bacteriol.">
        <title>Biochemistry and regulation of a novel Escherichia coli K-12 porin protein, OmpG, which produces unusually large channels.</title>
        <authorList>
            <person name="Fajardo D.A."/>
            <person name="Cheung J."/>
            <person name="Ito C."/>
            <person name="Sugawara E."/>
            <person name="Nikaido H."/>
            <person name="Misra R."/>
        </authorList>
    </citation>
    <scope>NUCLEOTIDE SEQUENCE [GENOMIC DNA]</scope>
    <scope>PROTEIN SEQUENCE OF 22-35</scope>
    <source>
        <strain>K12</strain>
    </source>
</reference>
<reference key="2">
    <citation type="journal article" date="1997" name="Science">
        <title>The complete genome sequence of Escherichia coli K-12.</title>
        <authorList>
            <person name="Blattner F.R."/>
            <person name="Plunkett G. III"/>
            <person name="Bloch C.A."/>
            <person name="Perna N.T."/>
            <person name="Burland V."/>
            <person name="Riley M."/>
            <person name="Collado-Vides J."/>
            <person name="Glasner J.D."/>
            <person name="Rode C.K."/>
            <person name="Mayhew G.F."/>
            <person name="Gregor J."/>
            <person name="Davis N.W."/>
            <person name="Kirkpatrick H.A."/>
            <person name="Goeden M.A."/>
            <person name="Rose D.J."/>
            <person name="Mau B."/>
            <person name="Shao Y."/>
        </authorList>
    </citation>
    <scope>NUCLEOTIDE SEQUENCE [LARGE SCALE GENOMIC DNA]</scope>
    <source>
        <strain>K12 / MG1655 / ATCC 47076</strain>
    </source>
</reference>
<reference key="3">
    <citation type="journal article" date="2006" name="Mol. Syst. Biol.">
        <title>Highly accurate genome sequences of Escherichia coli K-12 strains MG1655 and W3110.</title>
        <authorList>
            <person name="Hayashi K."/>
            <person name="Morooka N."/>
            <person name="Yamamoto Y."/>
            <person name="Fujita K."/>
            <person name="Isono K."/>
            <person name="Choi S."/>
            <person name="Ohtsubo E."/>
            <person name="Baba T."/>
            <person name="Wanner B.L."/>
            <person name="Mori H."/>
            <person name="Horiuchi T."/>
        </authorList>
    </citation>
    <scope>NUCLEOTIDE SEQUENCE [LARGE SCALE GENOMIC DNA]</scope>
    <source>
        <strain>K12 / W3110 / ATCC 27325 / DSM 5911</strain>
    </source>
</reference>
<reference key="4">
    <citation type="journal article" date="2001" name="Biosci. Biotechnol. Biochem.">
        <title>Characterization of the RcsC-&gt;YojN-&gt;RcsB phosphorelay signaling pathway involved in capsular synthesis in Escherichia coli.</title>
        <authorList>
            <person name="Chen M.H."/>
            <person name="Takeda S."/>
            <person name="Yamada H."/>
            <person name="Ishii Y."/>
            <person name="Yamashino T."/>
            <person name="Mizuno T."/>
        </authorList>
    </citation>
    <scope>FUNCTION IN THE REGULATION OF THE RCS SYSTEM</scope>
</reference>
<protein>
    <recommendedName>
        <fullName>Outer membrane porin G</fullName>
    </recommendedName>
    <alternativeName>
        <fullName>Outer membrane protein G</fullName>
    </alternativeName>
</protein>
<organism>
    <name type="scientific">Escherichia coli (strain K12)</name>
    <dbReference type="NCBI Taxonomy" id="83333"/>
    <lineage>
        <taxon>Bacteria</taxon>
        <taxon>Pseudomonadati</taxon>
        <taxon>Pseudomonadota</taxon>
        <taxon>Gammaproteobacteria</taxon>
        <taxon>Enterobacterales</taxon>
        <taxon>Enterobacteriaceae</taxon>
        <taxon>Escherichia</taxon>
    </lineage>
</organism>
<sequence length="301" mass="34913">MKKLLPCTALVMCAGMACAQAEERNDWHFNIGAMYEIENVEGYGEDMDGLAEPSVYFNAANGPWRIALAYYQEGPVDYSAGKRGTWFDRPELEVHYQFLENDDFSFGLTGGFRNYGYHYVDEPGKDTANMQRWKIAPDWDVKLTDDLRFNGWLSMYKFANDLNTTGYADTRVETETGLQYTFNETVALRVNYYLERGFNMDDSRNNGEFSTQEIRAYLPLTLGNHSVTPYTRIGLDRWSNWDWQDDIEREGHDFNRVGLFYGYDFQNGLSVSLEYAFEWQDHDEGDSDKFHYAGVGVNYSF</sequence>
<evidence type="ECO:0000255" key="1"/>
<evidence type="ECO:0000269" key="2">
    <source>
    </source>
</evidence>
<evidence type="ECO:0000269" key="3">
    <source>
    </source>
</evidence>
<evidence type="ECO:0007829" key="4">
    <source>
        <dbReference type="PDB" id="2F1C"/>
    </source>
</evidence>
<evidence type="ECO:0007829" key="5">
    <source>
        <dbReference type="PDB" id="2JQY"/>
    </source>
</evidence>
<evidence type="ECO:0007829" key="6">
    <source>
        <dbReference type="PDB" id="2WVP"/>
    </source>
</evidence>
<evidence type="ECO:0007829" key="7">
    <source>
        <dbReference type="PDB" id="2X9K"/>
    </source>
</evidence>
<evidence type="ECO:0007829" key="8">
    <source>
        <dbReference type="PDB" id="5MWV"/>
    </source>
</evidence>
<keyword id="KW-0002">3D-structure</keyword>
<keyword id="KW-0998">Cell outer membrane</keyword>
<keyword id="KW-0903">Direct protein sequencing</keyword>
<keyword id="KW-0406">Ion transport</keyword>
<keyword id="KW-0472">Membrane</keyword>
<keyword id="KW-0626">Porin</keyword>
<keyword id="KW-1185">Reference proteome</keyword>
<keyword id="KW-0732">Signal</keyword>
<keyword id="KW-0812">Transmembrane</keyword>
<keyword id="KW-1134">Transmembrane beta strand</keyword>
<keyword id="KW-0813">Transport</keyword>
<comment type="function">
    <text evidence="2">Forms channels functionally larger than those of classical porins.</text>
</comment>
<comment type="function">
    <text evidence="2">May act as a regulator of the RCS-phosphorelay signal transduction pathway.</text>
</comment>
<comment type="subunit">
    <text>Monomer.</text>
</comment>
<comment type="subcellular location">
    <subcellularLocation>
        <location>Cell outer membrane</location>
        <topology>Multi-pass membrane protein</topology>
    </subcellularLocation>
</comment>
<feature type="signal peptide" evidence="3">
    <location>
        <begin position="1"/>
        <end position="21"/>
    </location>
</feature>
<feature type="chain" id="PRO_0000025198" description="Outer membrane porin G">
    <location>
        <begin position="22"/>
        <end position="301"/>
    </location>
</feature>
<feature type="transmembrane region" description="Beta stranded" evidence="1">
    <location>
        <begin position="27"/>
        <end position="35"/>
    </location>
</feature>
<feature type="transmembrane region" description="Beta stranded" evidence="1">
    <location>
        <begin position="47"/>
        <end position="57"/>
    </location>
</feature>
<feature type="transmembrane region" description="Beta stranded" evidence="1">
    <location>
        <begin position="64"/>
        <end position="72"/>
    </location>
</feature>
<feature type="transmembrane region" description="Beta stranded" evidence="1">
    <location>
        <begin position="89"/>
        <end position="98"/>
    </location>
</feature>
<feature type="transmembrane region" description="Beta stranded" evidence="1">
    <location>
        <begin position="104"/>
        <end position="112"/>
    </location>
</feature>
<feature type="transmembrane region" description="Beta stranded" evidence="1">
    <location>
        <begin position="129"/>
        <end position="136"/>
    </location>
</feature>
<feature type="transmembrane region" description="Beta stranded" evidence="1">
    <location>
        <begin position="149"/>
        <end position="158"/>
    </location>
</feature>
<feature type="transmembrane region" description="Beta stranded" evidence="1">
    <location>
        <begin position="172"/>
        <end position="182"/>
    </location>
</feature>
<feature type="transmembrane region" description="Beta stranded" evidence="1">
    <location>
        <begin position="186"/>
        <end position="195"/>
    </location>
</feature>
<feature type="transmembrane region" description="Beta stranded" evidence="1">
    <location>
        <begin position="201"/>
        <end position="209"/>
    </location>
</feature>
<feature type="transmembrane region" description="Beta stranded" evidence="1">
    <location>
        <begin position="213"/>
        <end position="222"/>
    </location>
</feature>
<feature type="transmembrane region" description="Beta stranded" evidence="1">
    <location>
        <begin position="230"/>
        <end position="238"/>
    </location>
</feature>
<feature type="transmembrane region" description="Beta stranded" evidence="1">
    <location>
        <begin position="240"/>
        <end position="248"/>
    </location>
</feature>
<feature type="transmembrane region" description="Beta stranded" evidence="1">
    <location>
        <begin position="254"/>
        <end position="265"/>
    </location>
</feature>
<feature type="transmembrane region" description="Beta stranded" evidence="1">
    <location>
        <begin position="269"/>
        <end position="279"/>
    </location>
</feature>
<feature type="transmembrane region" description="Beta stranded" evidence="1">
    <location>
        <begin position="289"/>
        <end position="300"/>
    </location>
</feature>
<feature type="strand" evidence="5">
    <location>
        <begin position="24"/>
        <end position="26"/>
    </location>
</feature>
<feature type="strand" evidence="7">
    <location>
        <begin position="28"/>
        <end position="42"/>
    </location>
</feature>
<feature type="strand" evidence="7">
    <location>
        <begin position="45"/>
        <end position="60"/>
    </location>
</feature>
<feature type="strand" evidence="7">
    <location>
        <begin position="62"/>
        <end position="75"/>
    </location>
</feature>
<feature type="strand" evidence="7">
    <location>
        <begin position="78"/>
        <end position="81"/>
    </location>
</feature>
<feature type="turn" evidence="8">
    <location>
        <begin position="82"/>
        <end position="84"/>
    </location>
</feature>
<feature type="strand" evidence="7">
    <location>
        <begin position="86"/>
        <end position="118"/>
    </location>
</feature>
<feature type="strand" evidence="7">
    <location>
        <begin position="127"/>
        <end position="160"/>
    </location>
</feature>
<feature type="helix" evidence="7">
    <location>
        <begin position="162"/>
        <end position="165"/>
    </location>
</feature>
<feature type="strand" evidence="7">
    <location>
        <begin position="169"/>
        <end position="181"/>
    </location>
</feature>
<feature type="strand" evidence="7">
    <location>
        <begin position="183"/>
        <end position="198"/>
    </location>
</feature>
<feature type="strand" evidence="4">
    <location>
        <begin position="200"/>
        <end position="203"/>
    </location>
</feature>
<feature type="strand" evidence="7">
    <location>
        <begin position="209"/>
        <end position="217"/>
    </location>
</feature>
<feature type="strand" evidence="7">
    <location>
        <begin position="220"/>
        <end position="222"/>
    </location>
</feature>
<feature type="strand" evidence="7">
    <location>
        <begin position="225"/>
        <end position="239"/>
    </location>
</feature>
<feature type="strand" evidence="7">
    <location>
        <begin position="243"/>
        <end position="247"/>
    </location>
</feature>
<feature type="strand" evidence="7">
    <location>
        <begin position="254"/>
        <end position="264"/>
    </location>
</feature>
<feature type="strand" evidence="7">
    <location>
        <begin position="266"/>
        <end position="280"/>
    </location>
</feature>
<feature type="turn" evidence="6">
    <location>
        <begin position="283"/>
        <end position="285"/>
    </location>
</feature>
<feature type="strand" evidence="7">
    <location>
        <begin position="289"/>
        <end position="300"/>
    </location>
</feature>
<gene>
    <name type="primary">ompG</name>
    <name type="ordered locus">b1319</name>
    <name type="ordered locus">JW1312</name>
</gene>
<accession>P76045</accession>
<accession>Q2MBF5</accession>